<comment type="function">
    <text evidence="1">NDH-1 shuttles electrons from NADH, via FMN and iron-sulfur (Fe-S) centers, to quinones in the respiratory chain. The immediate electron acceptor for the enzyme in this species is believed to be ubiquinone. Couples the redox reaction to proton translocation (for every two electrons transferred, four hydrogen ions are translocated across the cytoplasmic membrane), and thus conserves the redox energy in a proton gradient.</text>
</comment>
<comment type="catalytic activity">
    <reaction evidence="1">
        <text>a quinone + NADH + 5 H(+)(in) = a quinol + NAD(+) + 4 H(+)(out)</text>
        <dbReference type="Rhea" id="RHEA:57888"/>
        <dbReference type="ChEBI" id="CHEBI:15378"/>
        <dbReference type="ChEBI" id="CHEBI:24646"/>
        <dbReference type="ChEBI" id="CHEBI:57540"/>
        <dbReference type="ChEBI" id="CHEBI:57945"/>
        <dbReference type="ChEBI" id="CHEBI:132124"/>
    </reaction>
</comment>
<comment type="subunit">
    <text evidence="1">NDH-1 is composed of 14 different subunits. Subunits NuoA, H, J, K, L, M, N constitute the membrane sector of the complex.</text>
</comment>
<comment type="subcellular location">
    <subcellularLocation>
        <location evidence="1">Cell inner membrane</location>
        <topology evidence="1">Multi-pass membrane protein</topology>
    </subcellularLocation>
</comment>
<comment type="similarity">
    <text evidence="1">Belongs to the complex I subunit 2 family.</text>
</comment>
<dbReference type="EC" id="7.1.1.-" evidence="1"/>
<dbReference type="EMBL" id="AM260522">
    <property type="protein sequence ID" value="CAJ99061.1"/>
    <property type="molecule type" value="Genomic_DNA"/>
</dbReference>
<dbReference type="RefSeq" id="WP_011577177.1">
    <property type="nucleotide sequence ID" value="NC_008229.1"/>
</dbReference>
<dbReference type="SMR" id="Q17Z65"/>
<dbReference type="STRING" id="382638.Hac_0211"/>
<dbReference type="GeneID" id="31757734"/>
<dbReference type="KEGG" id="hac:Hac_0211"/>
<dbReference type="eggNOG" id="COG1007">
    <property type="taxonomic scope" value="Bacteria"/>
</dbReference>
<dbReference type="HOGENOM" id="CLU_007100_1_4_7"/>
<dbReference type="OrthoDB" id="9768329at2"/>
<dbReference type="BioCyc" id="HACI382638:HAC_RS00940-MONOMER"/>
<dbReference type="Proteomes" id="UP000000775">
    <property type="component" value="Chromosome"/>
</dbReference>
<dbReference type="GO" id="GO:0005886">
    <property type="term" value="C:plasma membrane"/>
    <property type="evidence" value="ECO:0007669"/>
    <property type="project" value="UniProtKB-SubCell"/>
</dbReference>
<dbReference type="GO" id="GO:0008137">
    <property type="term" value="F:NADH dehydrogenase (ubiquinone) activity"/>
    <property type="evidence" value="ECO:0007669"/>
    <property type="project" value="InterPro"/>
</dbReference>
<dbReference type="GO" id="GO:0050136">
    <property type="term" value="F:NADH:ubiquinone reductase (non-electrogenic) activity"/>
    <property type="evidence" value="ECO:0007669"/>
    <property type="project" value="UniProtKB-UniRule"/>
</dbReference>
<dbReference type="GO" id="GO:0048038">
    <property type="term" value="F:quinone binding"/>
    <property type="evidence" value="ECO:0007669"/>
    <property type="project" value="UniProtKB-KW"/>
</dbReference>
<dbReference type="GO" id="GO:0042773">
    <property type="term" value="P:ATP synthesis coupled electron transport"/>
    <property type="evidence" value="ECO:0007669"/>
    <property type="project" value="InterPro"/>
</dbReference>
<dbReference type="HAMAP" id="MF_00445">
    <property type="entry name" value="NDH1_NuoN_1"/>
    <property type="match status" value="1"/>
</dbReference>
<dbReference type="InterPro" id="IPR010096">
    <property type="entry name" value="NADH-Q_OxRdtase_suN/2"/>
</dbReference>
<dbReference type="InterPro" id="IPR001750">
    <property type="entry name" value="ND/Mrp_TM"/>
</dbReference>
<dbReference type="NCBIfam" id="TIGR01770">
    <property type="entry name" value="NDH_I_N"/>
    <property type="match status" value="1"/>
</dbReference>
<dbReference type="NCBIfam" id="NF004444">
    <property type="entry name" value="PRK05777.2-2"/>
    <property type="match status" value="1"/>
</dbReference>
<dbReference type="NCBIfam" id="NF004448">
    <property type="entry name" value="PRK05777.2-6"/>
    <property type="match status" value="1"/>
</dbReference>
<dbReference type="PANTHER" id="PTHR22773">
    <property type="entry name" value="NADH DEHYDROGENASE"/>
    <property type="match status" value="1"/>
</dbReference>
<dbReference type="Pfam" id="PF00361">
    <property type="entry name" value="Proton_antipo_M"/>
    <property type="match status" value="1"/>
</dbReference>
<protein>
    <recommendedName>
        <fullName evidence="1">NADH-quinone oxidoreductase subunit N</fullName>
        <ecNumber evidence="1">7.1.1.-</ecNumber>
    </recommendedName>
    <alternativeName>
        <fullName evidence="1">NADH dehydrogenase I subunit N</fullName>
    </alternativeName>
    <alternativeName>
        <fullName evidence="1">NDH-1 subunit N</fullName>
    </alternativeName>
</protein>
<accession>Q17Z65</accession>
<evidence type="ECO:0000255" key="1">
    <source>
        <dbReference type="HAMAP-Rule" id="MF_00445"/>
    </source>
</evidence>
<feature type="chain" id="PRO_0000391159" description="NADH-quinone oxidoreductase subunit N">
    <location>
        <begin position="1"/>
        <end position="492"/>
    </location>
</feature>
<feature type="transmembrane region" description="Helical" evidence="1">
    <location>
        <begin position="18"/>
        <end position="38"/>
    </location>
</feature>
<feature type="transmembrane region" description="Helical" evidence="1">
    <location>
        <begin position="45"/>
        <end position="65"/>
    </location>
</feature>
<feature type="transmembrane region" description="Helical" evidence="1">
    <location>
        <begin position="80"/>
        <end position="100"/>
    </location>
</feature>
<feature type="transmembrane region" description="Helical" evidence="1">
    <location>
        <begin position="108"/>
        <end position="128"/>
    </location>
</feature>
<feature type="transmembrane region" description="Helical" evidence="1">
    <location>
        <begin position="133"/>
        <end position="153"/>
    </location>
</feature>
<feature type="transmembrane region" description="Helical" evidence="1">
    <location>
        <begin position="167"/>
        <end position="187"/>
    </location>
</feature>
<feature type="transmembrane region" description="Helical" evidence="1">
    <location>
        <begin position="209"/>
        <end position="229"/>
    </location>
</feature>
<feature type="transmembrane region" description="Helical" evidence="1">
    <location>
        <begin position="250"/>
        <end position="270"/>
    </location>
</feature>
<feature type="transmembrane region" description="Helical" evidence="1">
    <location>
        <begin position="277"/>
        <end position="297"/>
    </location>
</feature>
<feature type="transmembrane region" description="Helical" evidence="1">
    <location>
        <begin position="305"/>
        <end position="325"/>
    </location>
</feature>
<feature type="transmembrane region" description="Helical" evidence="1">
    <location>
        <begin position="333"/>
        <end position="353"/>
    </location>
</feature>
<feature type="transmembrane region" description="Helical" evidence="1">
    <location>
        <begin position="381"/>
        <end position="401"/>
    </location>
</feature>
<feature type="transmembrane region" description="Helical" evidence="1">
    <location>
        <begin position="415"/>
        <end position="435"/>
    </location>
</feature>
<feature type="transmembrane region" description="Helical" evidence="1">
    <location>
        <begin position="464"/>
        <end position="484"/>
    </location>
</feature>
<organism>
    <name type="scientific">Helicobacter acinonychis (strain Sheeba)</name>
    <dbReference type="NCBI Taxonomy" id="382638"/>
    <lineage>
        <taxon>Bacteria</taxon>
        <taxon>Pseudomonadati</taxon>
        <taxon>Campylobacterota</taxon>
        <taxon>Epsilonproteobacteria</taxon>
        <taxon>Campylobacterales</taxon>
        <taxon>Helicobacteraceae</taxon>
        <taxon>Helicobacter</taxon>
    </lineage>
</organism>
<proteinExistence type="inferred from homology"/>
<gene>
    <name evidence="1" type="primary">nuoN</name>
    <name type="ordered locus">Hac_0211</name>
</gene>
<name>NUON_HELAH</name>
<keyword id="KW-0997">Cell inner membrane</keyword>
<keyword id="KW-1003">Cell membrane</keyword>
<keyword id="KW-0472">Membrane</keyword>
<keyword id="KW-0520">NAD</keyword>
<keyword id="KW-0874">Quinone</keyword>
<keyword id="KW-1278">Translocase</keyword>
<keyword id="KW-0812">Transmembrane</keyword>
<keyword id="KW-1133">Transmembrane helix</keyword>
<keyword id="KW-0813">Transport</keyword>
<keyword id="KW-0830">Ubiquinone</keyword>
<sequence>MLIDSLHISFDSFNFESILPMLVLVCGGIFTLLINAFTSRFSRNLNMFLCMLFLVLDFLVVLGLEQQENAFFGFLSLDTLSLVSQSIVLISAFLLIFLALSKERFNEFQTAEFYPLYLFIIAGFQFMVSSNHLLLMLIGLETASLPICVLMALSGKRYGLEAGIKYFTMGAMASAFFAMGAMAFYLLTGSLNLEVITLYLYTEGVTNPMLFAMGVIFLIGAIGFKVSLVPFHTWMPDVYEGNNPVFASYISIVPKIAGFVVATRLFGAFIDTRIAWVEDIFYALILITITIPNLIALWQEDVKRMLAYSSISHSGFALACVFIHTEESQKAMFVYWFMFAFTYIGAFGLLWLLKSREKTWDERYDHPYSKFDGLIKTHPLVAILGAIFVFGLAGIPPFSVFWGKFLAVESALESNHILLAAVMLANSAVAVFYYFRWLVAMFFNKPLQTQSYAESDIYTQNATMPIYAVIIAMALVCLFSVFMMRGLLEFVA</sequence>
<reference key="1">
    <citation type="journal article" date="2006" name="PLoS Genet.">
        <title>Who ate whom? Adaptive Helicobacter genomic changes that accompanied a host jump from early humans to large felines.</title>
        <authorList>
            <person name="Eppinger M."/>
            <person name="Baar C."/>
            <person name="Linz B."/>
            <person name="Raddatz G."/>
            <person name="Lanz C."/>
            <person name="Keller H."/>
            <person name="Morelli G."/>
            <person name="Gressmann H."/>
            <person name="Achtman M."/>
            <person name="Schuster S.C."/>
        </authorList>
    </citation>
    <scope>NUCLEOTIDE SEQUENCE [LARGE SCALE GENOMIC DNA]</scope>
    <source>
        <strain>Sheeba</strain>
    </source>
</reference>